<sequence length="293" mass="31612">MLKGSITALVTPFDREGAFDEKAFRAFVNWQIEEGTKGLVPVGTTGETPTLSHDEHKRVIEVCIEVAAGRVPVIAGAGSNNTVEAIELAQHAEKAGADAVLVVTPYYNKPNQRGLYEHFSRVARSISIPLVIYNIPGRSIIDMTPETMGALVRDCKNIVGVKDATGKIERVSEQRAICGKEFIQLSGEDATALGFNAHGGVGCISVTSNIAPRLCAEFQEACQAGNFAKALELQDRLMPLHKALFLEPNPSGPKYALSRLGRIENVLRSPMVTIEAATAEKIDHAMKHAVLIN</sequence>
<feature type="chain" id="PRO_0000103088" description="4-hydroxy-tetrahydrodipicolinate synthase">
    <location>
        <begin position="1"/>
        <end position="293"/>
    </location>
</feature>
<feature type="active site" description="Proton donor/acceptor" evidence="1">
    <location>
        <position position="133"/>
    </location>
</feature>
<feature type="active site" description="Schiff-base intermediate with substrate" evidence="1">
    <location>
        <position position="162"/>
    </location>
</feature>
<feature type="binding site" evidence="1">
    <location>
        <position position="45"/>
    </location>
    <ligand>
        <name>pyruvate</name>
        <dbReference type="ChEBI" id="CHEBI:15361"/>
    </ligand>
</feature>
<feature type="binding site" evidence="1">
    <location>
        <position position="204"/>
    </location>
    <ligand>
        <name>pyruvate</name>
        <dbReference type="ChEBI" id="CHEBI:15361"/>
    </ligand>
</feature>
<feature type="site" description="Part of a proton relay during catalysis" evidence="1">
    <location>
        <position position="44"/>
    </location>
</feature>
<feature type="site" description="Part of a proton relay during catalysis" evidence="1">
    <location>
        <position position="107"/>
    </location>
</feature>
<comment type="function">
    <text evidence="1">Catalyzes the condensation of (S)-aspartate-beta-semialdehyde [(S)-ASA] and pyruvate to 4-hydroxy-tetrahydrodipicolinate (HTPA).</text>
</comment>
<comment type="catalytic activity">
    <reaction evidence="1">
        <text>L-aspartate 4-semialdehyde + pyruvate = (2S,4S)-4-hydroxy-2,3,4,5-tetrahydrodipicolinate + H2O + H(+)</text>
        <dbReference type="Rhea" id="RHEA:34171"/>
        <dbReference type="ChEBI" id="CHEBI:15361"/>
        <dbReference type="ChEBI" id="CHEBI:15377"/>
        <dbReference type="ChEBI" id="CHEBI:15378"/>
        <dbReference type="ChEBI" id="CHEBI:67139"/>
        <dbReference type="ChEBI" id="CHEBI:537519"/>
        <dbReference type="EC" id="4.3.3.7"/>
    </reaction>
</comment>
<comment type="pathway">
    <text evidence="1">Amino-acid biosynthesis; L-lysine biosynthesis via DAP pathway; (S)-tetrahydrodipicolinate from L-aspartate: step 3/4.</text>
</comment>
<comment type="subunit">
    <text evidence="1">Homotetramer; dimer of dimers.</text>
</comment>
<comment type="subcellular location">
    <subcellularLocation>
        <location evidence="1">Cytoplasm</location>
    </subcellularLocation>
</comment>
<comment type="similarity">
    <text evidence="1">Belongs to the DapA family.</text>
</comment>
<comment type="caution">
    <text evidence="2">Was originally thought to be a dihydrodipicolinate synthase (DHDPS), catalyzing the condensation of (S)-aspartate-beta-semialdehyde [(S)-ASA] and pyruvate to dihydrodipicolinate (DHDP). However, it was shown in E.coli that the product of the enzymatic reaction is not dihydrodipicolinate but in fact (4S)-4-hydroxy-2,3,4,5-tetrahydro-(2S)-dipicolinic acid (HTPA), and that the consecutive dehydration reaction leading to DHDP is not spontaneous but catalyzed by DapB.</text>
</comment>
<comment type="sequence caution" evidence="2">
    <conflict type="erroneous initiation">
        <sequence resource="EMBL-CDS" id="AAL52482"/>
    </conflict>
</comment>
<keyword id="KW-0028">Amino-acid biosynthesis</keyword>
<keyword id="KW-0963">Cytoplasm</keyword>
<keyword id="KW-0220">Diaminopimelate biosynthesis</keyword>
<keyword id="KW-0456">Lyase</keyword>
<keyword id="KW-0457">Lysine biosynthesis</keyword>
<keyword id="KW-0704">Schiff base</keyword>
<dbReference type="EC" id="4.3.3.7" evidence="1"/>
<dbReference type="EMBL" id="AE008917">
    <property type="protein sequence ID" value="AAL52482.1"/>
    <property type="status" value="ALT_INIT"/>
    <property type="molecule type" value="Genomic_DNA"/>
</dbReference>
<dbReference type="PIR" id="AG3414">
    <property type="entry name" value="AG3414"/>
</dbReference>
<dbReference type="RefSeq" id="WP_002963790.1">
    <property type="nucleotide sequence ID" value="NZ_GG703778.1"/>
</dbReference>
<dbReference type="SMR" id="Q8YG60"/>
<dbReference type="GeneID" id="93016947"/>
<dbReference type="KEGG" id="bme:BMEI1301"/>
<dbReference type="KEGG" id="bmel:DK63_104"/>
<dbReference type="PATRIC" id="fig|224914.52.peg.109"/>
<dbReference type="eggNOG" id="COG0329">
    <property type="taxonomic scope" value="Bacteria"/>
</dbReference>
<dbReference type="PhylomeDB" id="Q8YG60"/>
<dbReference type="UniPathway" id="UPA00034">
    <property type="reaction ID" value="UER00017"/>
</dbReference>
<dbReference type="Proteomes" id="UP000000419">
    <property type="component" value="Chromosome I"/>
</dbReference>
<dbReference type="GO" id="GO:0005829">
    <property type="term" value="C:cytosol"/>
    <property type="evidence" value="ECO:0007669"/>
    <property type="project" value="TreeGrafter"/>
</dbReference>
<dbReference type="GO" id="GO:0008840">
    <property type="term" value="F:4-hydroxy-tetrahydrodipicolinate synthase activity"/>
    <property type="evidence" value="ECO:0007669"/>
    <property type="project" value="UniProtKB-UniRule"/>
</dbReference>
<dbReference type="GO" id="GO:0019877">
    <property type="term" value="P:diaminopimelate biosynthetic process"/>
    <property type="evidence" value="ECO:0007669"/>
    <property type="project" value="UniProtKB-UniRule"/>
</dbReference>
<dbReference type="GO" id="GO:0009089">
    <property type="term" value="P:lysine biosynthetic process via diaminopimelate"/>
    <property type="evidence" value="ECO:0007669"/>
    <property type="project" value="UniProtKB-UniRule"/>
</dbReference>
<dbReference type="CDD" id="cd00950">
    <property type="entry name" value="DHDPS"/>
    <property type="match status" value="1"/>
</dbReference>
<dbReference type="Gene3D" id="3.20.20.70">
    <property type="entry name" value="Aldolase class I"/>
    <property type="match status" value="1"/>
</dbReference>
<dbReference type="HAMAP" id="MF_00418">
    <property type="entry name" value="DapA"/>
    <property type="match status" value="1"/>
</dbReference>
<dbReference type="InterPro" id="IPR013785">
    <property type="entry name" value="Aldolase_TIM"/>
</dbReference>
<dbReference type="InterPro" id="IPR005263">
    <property type="entry name" value="DapA"/>
</dbReference>
<dbReference type="InterPro" id="IPR002220">
    <property type="entry name" value="DapA-like"/>
</dbReference>
<dbReference type="InterPro" id="IPR020625">
    <property type="entry name" value="Schiff_base-form_aldolases_AS"/>
</dbReference>
<dbReference type="NCBIfam" id="TIGR00674">
    <property type="entry name" value="dapA"/>
    <property type="match status" value="1"/>
</dbReference>
<dbReference type="PANTHER" id="PTHR12128:SF66">
    <property type="entry name" value="4-HYDROXY-2-OXOGLUTARATE ALDOLASE, MITOCHONDRIAL"/>
    <property type="match status" value="1"/>
</dbReference>
<dbReference type="PANTHER" id="PTHR12128">
    <property type="entry name" value="DIHYDRODIPICOLINATE SYNTHASE"/>
    <property type="match status" value="1"/>
</dbReference>
<dbReference type="Pfam" id="PF00701">
    <property type="entry name" value="DHDPS"/>
    <property type="match status" value="1"/>
</dbReference>
<dbReference type="PIRSF" id="PIRSF001365">
    <property type="entry name" value="DHDPS"/>
    <property type="match status" value="1"/>
</dbReference>
<dbReference type="PRINTS" id="PR00146">
    <property type="entry name" value="DHPICSNTHASE"/>
</dbReference>
<dbReference type="SMART" id="SM01130">
    <property type="entry name" value="DHDPS"/>
    <property type="match status" value="1"/>
</dbReference>
<dbReference type="SUPFAM" id="SSF51569">
    <property type="entry name" value="Aldolase"/>
    <property type="match status" value="1"/>
</dbReference>
<dbReference type="PROSITE" id="PS00666">
    <property type="entry name" value="DHDPS_2"/>
    <property type="match status" value="1"/>
</dbReference>
<organism>
    <name type="scientific">Brucella melitensis biotype 1 (strain ATCC 23456 / CCUG 17765 / NCTC 10094 / 16M)</name>
    <dbReference type="NCBI Taxonomy" id="224914"/>
    <lineage>
        <taxon>Bacteria</taxon>
        <taxon>Pseudomonadati</taxon>
        <taxon>Pseudomonadota</taxon>
        <taxon>Alphaproteobacteria</taxon>
        <taxon>Hyphomicrobiales</taxon>
        <taxon>Brucellaceae</taxon>
        <taxon>Brucella/Ochrobactrum group</taxon>
        <taxon>Brucella</taxon>
    </lineage>
</organism>
<protein>
    <recommendedName>
        <fullName evidence="1">4-hydroxy-tetrahydrodipicolinate synthase</fullName>
        <shortName evidence="1">HTPA synthase</shortName>
        <ecNumber evidence="1">4.3.3.7</ecNumber>
    </recommendedName>
</protein>
<reference key="1">
    <citation type="journal article" date="2002" name="Proc. Natl. Acad. Sci. U.S.A.">
        <title>The genome sequence of the facultative intracellular pathogen Brucella melitensis.</title>
        <authorList>
            <person name="DelVecchio V.G."/>
            <person name="Kapatral V."/>
            <person name="Redkar R.J."/>
            <person name="Patra G."/>
            <person name="Mujer C."/>
            <person name="Los T."/>
            <person name="Ivanova N."/>
            <person name="Anderson I."/>
            <person name="Bhattacharyya A."/>
            <person name="Lykidis A."/>
            <person name="Reznik G."/>
            <person name="Jablonski L."/>
            <person name="Larsen N."/>
            <person name="D'Souza M."/>
            <person name="Bernal A."/>
            <person name="Mazur M."/>
            <person name="Goltsman E."/>
            <person name="Selkov E."/>
            <person name="Elzer P.H."/>
            <person name="Hagius S."/>
            <person name="O'Callaghan D."/>
            <person name="Letesson J.-J."/>
            <person name="Haselkorn R."/>
            <person name="Kyrpides N.C."/>
            <person name="Overbeek R."/>
        </authorList>
    </citation>
    <scope>NUCLEOTIDE SEQUENCE [LARGE SCALE GENOMIC DNA]</scope>
    <source>
        <strain>ATCC 23456 / CCUG 17765 / NCTC 10094 / 16M</strain>
    </source>
</reference>
<name>DAPA_BRUME</name>
<proteinExistence type="inferred from homology"/>
<gene>
    <name evidence="1" type="primary">dapA</name>
    <name type="ordered locus">BMEI1301</name>
</gene>
<accession>Q8YG60</accession>
<evidence type="ECO:0000255" key="1">
    <source>
        <dbReference type="HAMAP-Rule" id="MF_00418"/>
    </source>
</evidence>
<evidence type="ECO:0000305" key="2"/>